<comment type="function">
    <text evidence="1">Potential calcium sensor.</text>
</comment>
<comment type="caution">
    <text evidence="4">Although assigned as a calmodulin family member by PubMed:17263873, it only contains EF-hand domains.</text>
</comment>
<organism>
    <name type="scientific">Oryza sativa subsp. japonica</name>
    <name type="common">Rice</name>
    <dbReference type="NCBI Taxonomy" id="39947"/>
    <lineage>
        <taxon>Eukaryota</taxon>
        <taxon>Viridiplantae</taxon>
        <taxon>Streptophyta</taxon>
        <taxon>Embryophyta</taxon>
        <taxon>Tracheophyta</taxon>
        <taxon>Spermatophyta</taxon>
        <taxon>Magnoliopsida</taxon>
        <taxon>Liliopsida</taxon>
        <taxon>Poales</taxon>
        <taxon>Poaceae</taxon>
        <taxon>BOP clade</taxon>
        <taxon>Oryzoideae</taxon>
        <taxon>Oryzeae</taxon>
        <taxon>Oryzinae</taxon>
        <taxon>Oryza</taxon>
        <taxon>Oryza sativa</taxon>
    </lineage>
</organism>
<proteinExistence type="evidence at transcript level"/>
<feature type="chain" id="PRO_0000338426" description="Probable calcium-binding protein CML11">
    <location>
        <begin position="1"/>
        <end position="211"/>
    </location>
</feature>
<feature type="domain" description="EF-hand 1" evidence="2">
    <location>
        <begin position="60"/>
        <end position="95"/>
    </location>
</feature>
<feature type="domain" description="EF-hand 2" evidence="2">
    <location>
        <begin position="96"/>
        <end position="131"/>
    </location>
</feature>
<feature type="domain" description="EF-hand 3" evidence="2">
    <location>
        <begin position="136"/>
        <end position="171"/>
    </location>
</feature>
<feature type="domain" description="EF-hand 4" evidence="2">
    <location>
        <begin position="172"/>
        <end position="207"/>
    </location>
</feature>
<feature type="region of interest" description="Disordered" evidence="3">
    <location>
        <begin position="1"/>
        <end position="22"/>
    </location>
</feature>
<feature type="region of interest" description="Disordered" evidence="3">
    <location>
        <begin position="40"/>
        <end position="60"/>
    </location>
</feature>
<feature type="compositionally biased region" description="Low complexity" evidence="3">
    <location>
        <begin position="44"/>
        <end position="53"/>
    </location>
</feature>
<feature type="binding site" evidence="2">
    <location>
        <position position="73"/>
    </location>
    <ligand>
        <name>Ca(2+)</name>
        <dbReference type="ChEBI" id="CHEBI:29108"/>
        <label>1</label>
    </ligand>
</feature>
<feature type="binding site" evidence="2">
    <location>
        <position position="75"/>
    </location>
    <ligand>
        <name>Ca(2+)</name>
        <dbReference type="ChEBI" id="CHEBI:29108"/>
        <label>1</label>
    </ligand>
</feature>
<feature type="binding site" evidence="2">
    <location>
        <position position="77"/>
    </location>
    <ligand>
        <name>Ca(2+)</name>
        <dbReference type="ChEBI" id="CHEBI:29108"/>
        <label>1</label>
    </ligand>
</feature>
<feature type="binding site" evidence="2">
    <location>
        <position position="79"/>
    </location>
    <ligand>
        <name>Ca(2+)</name>
        <dbReference type="ChEBI" id="CHEBI:29108"/>
        <label>1</label>
    </ligand>
</feature>
<feature type="binding site" evidence="2">
    <location>
        <position position="84"/>
    </location>
    <ligand>
        <name>Ca(2+)</name>
        <dbReference type="ChEBI" id="CHEBI:29108"/>
        <label>1</label>
    </ligand>
</feature>
<feature type="binding site" evidence="2">
    <location>
        <position position="109"/>
    </location>
    <ligand>
        <name>Ca(2+)</name>
        <dbReference type="ChEBI" id="CHEBI:29108"/>
        <label>2</label>
    </ligand>
</feature>
<feature type="binding site" evidence="2">
    <location>
        <position position="111"/>
    </location>
    <ligand>
        <name>Ca(2+)</name>
        <dbReference type="ChEBI" id="CHEBI:29108"/>
        <label>2</label>
    </ligand>
</feature>
<feature type="binding site" evidence="2">
    <location>
        <position position="113"/>
    </location>
    <ligand>
        <name>Ca(2+)</name>
        <dbReference type="ChEBI" id="CHEBI:29108"/>
        <label>2</label>
    </ligand>
</feature>
<feature type="binding site" evidence="2">
    <location>
        <position position="120"/>
    </location>
    <ligand>
        <name>Ca(2+)</name>
        <dbReference type="ChEBI" id="CHEBI:29108"/>
        <label>2</label>
    </ligand>
</feature>
<feature type="binding site" evidence="2">
    <location>
        <position position="149"/>
    </location>
    <ligand>
        <name>Ca(2+)</name>
        <dbReference type="ChEBI" id="CHEBI:29108"/>
        <label>3</label>
    </ligand>
</feature>
<feature type="binding site" evidence="2">
    <location>
        <position position="151"/>
    </location>
    <ligand>
        <name>Ca(2+)</name>
        <dbReference type="ChEBI" id="CHEBI:29108"/>
        <label>3</label>
    </ligand>
</feature>
<feature type="binding site" evidence="2">
    <location>
        <position position="153"/>
    </location>
    <ligand>
        <name>Ca(2+)</name>
        <dbReference type="ChEBI" id="CHEBI:29108"/>
        <label>3</label>
    </ligand>
</feature>
<feature type="binding site" evidence="2">
    <location>
        <position position="160"/>
    </location>
    <ligand>
        <name>Ca(2+)</name>
        <dbReference type="ChEBI" id="CHEBI:29108"/>
        <label>3</label>
    </ligand>
</feature>
<feature type="binding site" evidence="2">
    <location>
        <position position="185"/>
    </location>
    <ligand>
        <name>Ca(2+)</name>
        <dbReference type="ChEBI" id="CHEBI:29108"/>
        <label>4</label>
    </ligand>
</feature>
<feature type="binding site" evidence="2">
    <location>
        <position position="187"/>
    </location>
    <ligand>
        <name>Ca(2+)</name>
        <dbReference type="ChEBI" id="CHEBI:29108"/>
        <label>4</label>
    </ligand>
</feature>
<feature type="binding site" evidence="2">
    <location>
        <position position="189"/>
    </location>
    <ligand>
        <name>Ca(2+)</name>
        <dbReference type="ChEBI" id="CHEBI:29108"/>
        <label>4</label>
    </ligand>
</feature>
<feature type="binding site" evidence="2">
    <location>
        <position position="191"/>
    </location>
    <ligand>
        <name>Ca(2+)</name>
        <dbReference type="ChEBI" id="CHEBI:29108"/>
        <label>4</label>
    </ligand>
</feature>
<feature type="binding site" evidence="2">
    <location>
        <position position="196"/>
    </location>
    <ligand>
        <name>Ca(2+)</name>
        <dbReference type="ChEBI" id="CHEBI:29108"/>
        <label>4</label>
    </ligand>
</feature>
<dbReference type="EMBL" id="AP003054">
    <property type="protein sequence ID" value="BAB33275.1"/>
    <property type="molecule type" value="Genomic_DNA"/>
</dbReference>
<dbReference type="EMBL" id="AP008207">
    <property type="protein sequence ID" value="BAF05060.1"/>
    <property type="molecule type" value="Genomic_DNA"/>
</dbReference>
<dbReference type="EMBL" id="AP014957">
    <property type="protein sequence ID" value="BAS72346.1"/>
    <property type="molecule type" value="Genomic_DNA"/>
</dbReference>
<dbReference type="EMBL" id="CM000138">
    <property type="protein sequence ID" value="EAZ12060.1"/>
    <property type="molecule type" value="Genomic_DNA"/>
</dbReference>
<dbReference type="EMBL" id="AK072726">
    <property type="protein sequence ID" value="BAG93116.1"/>
    <property type="molecule type" value="mRNA"/>
</dbReference>
<dbReference type="RefSeq" id="XP_015634896.1">
    <property type="nucleotide sequence ID" value="XM_015779410.1"/>
</dbReference>
<dbReference type="SMR" id="Q9AWK2"/>
<dbReference type="FunCoup" id="Q9AWK2">
    <property type="interactions" value="155"/>
</dbReference>
<dbReference type="STRING" id="39947.Q9AWK2"/>
<dbReference type="PaxDb" id="39947-Q9AWK2"/>
<dbReference type="EnsemblPlants" id="Os01t0505600-01">
    <property type="protein sequence ID" value="Os01t0505600-01"/>
    <property type="gene ID" value="Os01g0505600"/>
</dbReference>
<dbReference type="Gramene" id="Os01t0505600-01">
    <property type="protein sequence ID" value="Os01t0505600-01"/>
    <property type="gene ID" value="Os01g0505600"/>
</dbReference>
<dbReference type="KEGG" id="dosa:Os01g0505600"/>
<dbReference type="eggNOG" id="KOG0027">
    <property type="taxonomic scope" value="Eukaryota"/>
</dbReference>
<dbReference type="HOGENOM" id="CLU_061288_2_2_1"/>
<dbReference type="InParanoid" id="Q9AWK2"/>
<dbReference type="OMA" id="MSNKQPV"/>
<dbReference type="OrthoDB" id="26525at2759"/>
<dbReference type="Proteomes" id="UP000000763">
    <property type="component" value="Chromosome 1"/>
</dbReference>
<dbReference type="Proteomes" id="UP000007752">
    <property type="component" value="Chromosome 1"/>
</dbReference>
<dbReference type="Proteomes" id="UP000059680">
    <property type="component" value="Chromosome 1"/>
</dbReference>
<dbReference type="GO" id="GO:0005737">
    <property type="term" value="C:cytoplasm"/>
    <property type="evidence" value="ECO:0000318"/>
    <property type="project" value="GO_Central"/>
</dbReference>
<dbReference type="GO" id="GO:0005509">
    <property type="term" value="F:calcium ion binding"/>
    <property type="evidence" value="ECO:0000318"/>
    <property type="project" value="GO_Central"/>
</dbReference>
<dbReference type="GO" id="GO:0030234">
    <property type="term" value="F:enzyme regulator activity"/>
    <property type="evidence" value="ECO:0000318"/>
    <property type="project" value="GO_Central"/>
</dbReference>
<dbReference type="CDD" id="cd00051">
    <property type="entry name" value="EFh"/>
    <property type="match status" value="1"/>
</dbReference>
<dbReference type="FunFam" id="1.10.238.10:FF:000601">
    <property type="entry name" value="Probable calcium-binding protein CML11"/>
    <property type="match status" value="1"/>
</dbReference>
<dbReference type="FunFam" id="1.10.238.10:FF:000123">
    <property type="entry name" value="probable calcium-binding protein CML18"/>
    <property type="match status" value="1"/>
</dbReference>
<dbReference type="Gene3D" id="1.10.238.10">
    <property type="entry name" value="EF-hand"/>
    <property type="match status" value="2"/>
</dbReference>
<dbReference type="InterPro" id="IPR051111">
    <property type="entry name" value="Ca-binding_regulatory"/>
</dbReference>
<dbReference type="InterPro" id="IPR011992">
    <property type="entry name" value="EF-hand-dom_pair"/>
</dbReference>
<dbReference type="InterPro" id="IPR018247">
    <property type="entry name" value="EF_Hand_1_Ca_BS"/>
</dbReference>
<dbReference type="InterPro" id="IPR002048">
    <property type="entry name" value="EF_hand_dom"/>
</dbReference>
<dbReference type="PANTHER" id="PTHR46311">
    <property type="entry name" value="CALCIUM-BINDING PROTEIN 8-RELATED"/>
    <property type="match status" value="1"/>
</dbReference>
<dbReference type="PANTHER" id="PTHR46311:SF5">
    <property type="entry name" value="EF-HAND DOMAIN-CONTAINING PROTEIN"/>
    <property type="match status" value="1"/>
</dbReference>
<dbReference type="Pfam" id="PF13499">
    <property type="entry name" value="EF-hand_7"/>
    <property type="match status" value="2"/>
</dbReference>
<dbReference type="SMART" id="SM00054">
    <property type="entry name" value="EFh"/>
    <property type="match status" value="4"/>
</dbReference>
<dbReference type="SUPFAM" id="SSF47473">
    <property type="entry name" value="EF-hand"/>
    <property type="match status" value="1"/>
</dbReference>
<dbReference type="PROSITE" id="PS00018">
    <property type="entry name" value="EF_HAND_1"/>
    <property type="match status" value="4"/>
</dbReference>
<dbReference type="PROSITE" id="PS50222">
    <property type="entry name" value="EF_HAND_2"/>
    <property type="match status" value="4"/>
</dbReference>
<reference key="1">
    <citation type="journal article" date="2002" name="Nature">
        <title>The genome sequence and structure of rice chromosome 1.</title>
        <authorList>
            <person name="Sasaki T."/>
            <person name="Matsumoto T."/>
            <person name="Yamamoto K."/>
            <person name="Sakata K."/>
            <person name="Baba T."/>
            <person name="Katayose Y."/>
            <person name="Wu J."/>
            <person name="Niimura Y."/>
            <person name="Cheng Z."/>
            <person name="Nagamura Y."/>
            <person name="Antonio B.A."/>
            <person name="Kanamori H."/>
            <person name="Hosokawa S."/>
            <person name="Masukawa M."/>
            <person name="Arikawa K."/>
            <person name="Chiden Y."/>
            <person name="Hayashi M."/>
            <person name="Okamoto M."/>
            <person name="Ando T."/>
            <person name="Aoki H."/>
            <person name="Arita K."/>
            <person name="Hamada M."/>
            <person name="Harada C."/>
            <person name="Hijishita S."/>
            <person name="Honda M."/>
            <person name="Ichikawa Y."/>
            <person name="Idonuma A."/>
            <person name="Iijima M."/>
            <person name="Ikeda M."/>
            <person name="Ikeno M."/>
            <person name="Ito S."/>
            <person name="Ito T."/>
            <person name="Ito Y."/>
            <person name="Ito Y."/>
            <person name="Iwabuchi A."/>
            <person name="Kamiya K."/>
            <person name="Karasawa W."/>
            <person name="Katagiri S."/>
            <person name="Kikuta A."/>
            <person name="Kobayashi N."/>
            <person name="Kono I."/>
            <person name="Machita K."/>
            <person name="Maehara T."/>
            <person name="Mizuno H."/>
            <person name="Mizubayashi T."/>
            <person name="Mukai Y."/>
            <person name="Nagasaki H."/>
            <person name="Nakashima M."/>
            <person name="Nakama Y."/>
            <person name="Nakamichi Y."/>
            <person name="Nakamura M."/>
            <person name="Namiki N."/>
            <person name="Negishi M."/>
            <person name="Ohta I."/>
            <person name="Ono N."/>
            <person name="Saji S."/>
            <person name="Sakai K."/>
            <person name="Shibata M."/>
            <person name="Shimokawa T."/>
            <person name="Shomura A."/>
            <person name="Song J."/>
            <person name="Takazaki Y."/>
            <person name="Terasawa K."/>
            <person name="Tsuji K."/>
            <person name="Waki K."/>
            <person name="Yamagata H."/>
            <person name="Yamane H."/>
            <person name="Yoshiki S."/>
            <person name="Yoshihara R."/>
            <person name="Yukawa K."/>
            <person name="Zhong H."/>
            <person name="Iwama H."/>
            <person name="Endo T."/>
            <person name="Ito H."/>
            <person name="Hahn J.H."/>
            <person name="Kim H.-I."/>
            <person name="Eun M.-Y."/>
            <person name="Yano M."/>
            <person name="Jiang J."/>
            <person name="Gojobori T."/>
        </authorList>
    </citation>
    <scope>NUCLEOTIDE SEQUENCE [LARGE SCALE GENOMIC DNA]</scope>
    <source>
        <strain>cv. Nipponbare</strain>
    </source>
</reference>
<reference key="2">
    <citation type="journal article" date="2005" name="Nature">
        <title>The map-based sequence of the rice genome.</title>
        <authorList>
            <consortium name="International rice genome sequencing project (IRGSP)"/>
        </authorList>
    </citation>
    <scope>NUCLEOTIDE SEQUENCE [LARGE SCALE GENOMIC DNA]</scope>
    <source>
        <strain>cv. Nipponbare</strain>
    </source>
</reference>
<reference key="3">
    <citation type="journal article" date="2008" name="Nucleic Acids Res.">
        <title>The rice annotation project database (RAP-DB): 2008 update.</title>
        <authorList>
            <consortium name="The rice annotation project (RAP)"/>
        </authorList>
    </citation>
    <scope>GENOME REANNOTATION</scope>
    <source>
        <strain>cv. Nipponbare</strain>
    </source>
</reference>
<reference key="4">
    <citation type="journal article" date="2013" name="Rice">
        <title>Improvement of the Oryza sativa Nipponbare reference genome using next generation sequence and optical map data.</title>
        <authorList>
            <person name="Kawahara Y."/>
            <person name="de la Bastide M."/>
            <person name="Hamilton J.P."/>
            <person name="Kanamori H."/>
            <person name="McCombie W.R."/>
            <person name="Ouyang S."/>
            <person name="Schwartz D.C."/>
            <person name="Tanaka T."/>
            <person name="Wu J."/>
            <person name="Zhou S."/>
            <person name="Childs K.L."/>
            <person name="Davidson R.M."/>
            <person name="Lin H."/>
            <person name="Quesada-Ocampo L."/>
            <person name="Vaillancourt B."/>
            <person name="Sakai H."/>
            <person name="Lee S.S."/>
            <person name="Kim J."/>
            <person name="Numa H."/>
            <person name="Itoh T."/>
            <person name="Buell C.R."/>
            <person name="Matsumoto T."/>
        </authorList>
    </citation>
    <scope>GENOME REANNOTATION</scope>
    <source>
        <strain>cv. Nipponbare</strain>
    </source>
</reference>
<reference key="5">
    <citation type="journal article" date="2005" name="PLoS Biol.">
        <title>The genomes of Oryza sativa: a history of duplications.</title>
        <authorList>
            <person name="Yu J."/>
            <person name="Wang J."/>
            <person name="Lin W."/>
            <person name="Li S."/>
            <person name="Li H."/>
            <person name="Zhou J."/>
            <person name="Ni P."/>
            <person name="Dong W."/>
            <person name="Hu S."/>
            <person name="Zeng C."/>
            <person name="Zhang J."/>
            <person name="Zhang Y."/>
            <person name="Li R."/>
            <person name="Xu Z."/>
            <person name="Li S."/>
            <person name="Li X."/>
            <person name="Zheng H."/>
            <person name="Cong L."/>
            <person name="Lin L."/>
            <person name="Yin J."/>
            <person name="Geng J."/>
            <person name="Li G."/>
            <person name="Shi J."/>
            <person name="Liu J."/>
            <person name="Lv H."/>
            <person name="Li J."/>
            <person name="Wang J."/>
            <person name="Deng Y."/>
            <person name="Ran L."/>
            <person name="Shi X."/>
            <person name="Wang X."/>
            <person name="Wu Q."/>
            <person name="Li C."/>
            <person name="Ren X."/>
            <person name="Wang J."/>
            <person name="Wang X."/>
            <person name="Li D."/>
            <person name="Liu D."/>
            <person name="Zhang X."/>
            <person name="Ji Z."/>
            <person name="Zhao W."/>
            <person name="Sun Y."/>
            <person name="Zhang Z."/>
            <person name="Bao J."/>
            <person name="Han Y."/>
            <person name="Dong L."/>
            <person name="Ji J."/>
            <person name="Chen P."/>
            <person name="Wu S."/>
            <person name="Liu J."/>
            <person name="Xiao Y."/>
            <person name="Bu D."/>
            <person name="Tan J."/>
            <person name="Yang L."/>
            <person name="Ye C."/>
            <person name="Zhang J."/>
            <person name="Xu J."/>
            <person name="Zhou Y."/>
            <person name="Yu Y."/>
            <person name="Zhang B."/>
            <person name="Zhuang S."/>
            <person name="Wei H."/>
            <person name="Liu B."/>
            <person name="Lei M."/>
            <person name="Yu H."/>
            <person name="Li Y."/>
            <person name="Xu H."/>
            <person name="Wei S."/>
            <person name="He X."/>
            <person name="Fang L."/>
            <person name="Zhang Z."/>
            <person name="Zhang Y."/>
            <person name="Huang X."/>
            <person name="Su Z."/>
            <person name="Tong W."/>
            <person name="Li J."/>
            <person name="Tong Z."/>
            <person name="Li S."/>
            <person name="Ye J."/>
            <person name="Wang L."/>
            <person name="Fang L."/>
            <person name="Lei T."/>
            <person name="Chen C.-S."/>
            <person name="Chen H.-C."/>
            <person name="Xu Z."/>
            <person name="Li H."/>
            <person name="Huang H."/>
            <person name="Zhang F."/>
            <person name="Xu H."/>
            <person name="Li N."/>
            <person name="Zhao C."/>
            <person name="Li S."/>
            <person name="Dong L."/>
            <person name="Huang Y."/>
            <person name="Li L."/>
            <person name="Xi Y."/>
            <person name="Qi Q."/>
            <person name="Li W."/>
            <person name="Zhang B."/>
            <person name="Hu W."/>
            <person name="Zhang Y."/>
            <person name="Tian X."/>
            <person name="Jiao Y."/>
            <person name="Liang X."/>
            <person name="Jin J."/>
            <person name="Gao L."/>
            <person name="Zheng W."/>
            <person name="Hao B."/>
            <person name="Liu S.-M."/>
            <person name="Wang W."/>
            <person name="Yuan L."/>
            <person name="Cao M."/>
            <person name="McDermott J."/>
            <person name="Samudrala R."/>
            <person name="Wang J."/>
            <person name="Wong G.K.-S."/>
            <person name="Yang H."/>
        </authorList>
    </citation>
    <scope>NUCLEOTIDE SEQUENCE [LARGE SCALE GENOMIC DNA]</scope>
    <source>
        <strain>cv. Nipponbare</strain>
    </source>
</reference>
<reference key="6">
    <citation type="journal article" date="2003" name="Science">
        <title>Collection, mapping, and annotation of over 28,000 cDNA clones from japonica rice.</title>
        <authorList>
            <consortium name="The rice full-length cDNA consortium"/>
        </authorList>
    </citation>
    <scope>NUCLEOTIDE SEQUENCE [LARGE SCALE MRNA]</scope>
    <source>
        <strain>cv. Nipponbare</strain>
    </source>
</reference>
<reference key="7">
    <citation type="journal article" date="2007" name="BMC Plant Biol.">
        <title>Genome-wide identification and analyses of the rice calmodulin and related potential calcium sensor proteins.</title>
        <authorList>
            <person name="Boonburapong B."/>
            <person name="Buaboocha T."/>
        </authorList>
    </citation>
    <scope>GENE FAMILY</scope>
    <scope>NOMENCLATURE</scope>
</reference>
<gene>
    <name type="primary">CML11</name>
    <name type="ordered locus">Os01g0505600</name>
    <name type="ordered locus">LOC_Os01g32120</name>
    <name type="ORF">OsJ_001885</name>
    <name type="ORF">P0436D06.34</name>
</gene>
<evidence type="ECO:0000250" key="1"/>
<evidence type="ECO:0000255" key="2">
    <source>
        <dbReference type="PROSITE-ProRule" id="PRU00448"/>
    </source>
</evidence>
<evidence type="ECO:0000256" key="3">
    <source>
        <dbReference type="SAM" id="MobiDB-lite"/>
    </source>
</evidence>
<evidence type="ECO:0000305" key="4"/>
<keyword id="KW-0106">Calcium</keyword>
<keyword id="KW-0479">Metal-binding</keyword>
<keyword id="KW-1185">Reference proteome</keyword>
<keyword id="KW-0677">Repeat</keyword>
<sequence length="211" mass="22948">MSEPATTTPTPTPAGDHDAAATACKPAETTTALITCRSSSCSAQQQQQQQQQQEEPLGDDQLGELREIFRSFDRNGDGSLTQLELGSLLRSLGLKPSTDELDSLIQRADTNSNGLIEFSEFVALVAPELLYDRAPYSEDQIRRLFNIFDRDGNGFITAAELAHSMAKLGHALTVKELTGMIKEADTDGDGRISFQEFSRAITAAAFDNIFS</sequence>
<name>CML11_ORYSJ</name>
<accession>Q9AWK2</accession>
<accession>B7EL69</accession>
<protein>
    <recommendedName>
        <fullName>Probable calcium-binding protein CML11</fullName>
    </recommendedName>
    <alternativeName>
        <fullName>Calmodulin-like protein 11</fullName>
    </alternativeName>
</protein>